<gene>
    <name evidence="1" type="primary">nuoC</name>
    <name type="ordered locus">Fphi_0931</name>
</gene>
<proteinExistence type="inferred from homology"/>
<reference key="1">
    <citation type="submission" date="2007-12" db="EMBL/GenBank/DDBJ databases">
        <title>Complete sequence of chromosome of Francisella philomiragia subsp. philomiragia ATCC 25017.</title>
        <authorList>
            <consortium name="US DOE Joint Genome Institute"/>
            <person name="Copeland A."/>
            <person name="Lucas S."/>
            <person name="Lapidus A."/>
            <person name="Barry K."/>
            <person name="Detter J.C."/>
            <person name="Glavina del Rio T."/>
            <person name="Hammon N."/>
            <person name="Israni S."/>
            <person name="Dalin E."/>
            <person name="Tice H."/>
            <person name="Pitluck S."/>
            <person name="Chain P."/>
            <person name="Malfatti S."/>
            <person name="Shin M."/>
            <person name="Vergez L."/>
            <person name="Schmutz J."/>
            <person name="Larimer F."/>
            <person name="Land M."/>
            <person name="Hauser L."/>
            <person name="Richardson P."/>
        </authorList>
    </citation>
    <scope>NUCLEOTIDE SEQUENCE [LARGE SCALE GENOMIC DNA]</scope>
    <source>
        <strain>ATCC 25017 / CCUG 19701 / FSC 153 / O#319-036</strain>
    </source>
</reference>
<dbReference type="EC" id="7.1.1.-" evidence="1"/>
<dbReference type="EMBL" id="CP000937">
    <property type="protein sequence ID" value="ABZ87154.1"/>
    <property type="molecule type" value="Genomic_DNA"/>
</dbReference>
<dbReference type="SMR" id="B0TWP6"/>
<dbReference type="KEGG" id="fph:Fphi_0931"/>
<dbReference type="eggNOG" id="COG0852">
    <property type="taxonomic scope" value="Bacteria"/>
</dbReference>
<dbReference type="HOGENOM" id="CLU_042628_2_1_6"/>
<dbReference type="GO" id="GO:0005886">
    <property type="term" value="C:plasma membrane"/>
    <property type="evidence" value="ECO:0007669"/>
    <property type="project" value="UniProtKB-SubCell"/>
</dbReference>
<dbReference type="GO" id="GO:0008137">
    <property type="term" value="F:NADH dehydrogenase (ubiquinone) activity"/>
    <property type="evidence" value="ECO:0007669"/>
    <property type="project" value="InterPro"/>
</dbReference>
<dbReference type="GO" id="GO:0050136">
    <property type="term" value="F:NADH:ubiquinone reductase (non-electrogenic) activity"/>
    <property type="evidence" value="ECO:0007669"/>
    <property type="project" value="UniProtKB-UniRule"/>
</dbReference>
<dbReference type="GO" id="GO:0048038">
    <property type="term" value="F:quinone binding"/>
    <property type="evidence" value="ECO:0007669"/>
    <property type="project" value="UniProtKB-KW"/>
</dbReference>
<dbReference type="Gene3D" id="3.30.460.80">
    <property type="entry name" value="NADH:ubiquinone oxidoreductase, 30kDa subunit"/>
    <property type="match status" value="1"/>
</dbReference>
<dbReference type="HAMAP" id="MF_01357">
    <property type="entry name" value="NDH1_NuoC"/>
    <property type="match status" value="1"/>
</dbReference>
<dbReference type="InterPro" id="IPR010218">
    <property type="entry name" value="NADH_DH_suC"/>
</dbReference>
<dbReference type="InterPro" id="IPR037232">
    <property type="entry name" value="NADH_quin_OxRdtase_su_C/D-like"/>
</dbReference>
<dbReference type="InterPro" id="IPR001268">
    <property type="entry name" value="NADH_UbQ_OxRdtase_30kDa_su"/>
</dbReference>
<dbReference type="InterPro" id="IPR020396">
    <property type="entry name" value="NADH_UbQ_OxRdtase_CS"/>
</dbReference>
<dbReference type="NCBIfam" id="TIGR01961">
    <property type="entry name" value="NuoC_fam"/>
    <property type="match status" value="1"/>
</dbReference>
<dbReference type="NCBIfam" id="NF004730">
    <property type="entry name" value="PRK06074.1-1"/>
    <property type="match status" value="1"/>
</dbReference>
<dbReference type="PANTHER" id="PTHR10884:SF14">
    <property type="entry name" value="NADH DEHYDROGENASE [UBIQUINONE] IRON-SULFUR PROTEIN 3, MITOCHONDRIAL"/>
    <property type="match status" value="1"/>
</dbReference>
<dbReference type="PANTHER" id="PTHR10884">
    <property type="entry name" value="NADH DEHYDROGENASE UBIQUINONE IRON-SULFUR PROTEIN 3"/>
    <property type="match status" value="1"/>
</dbReference>
<dbReference type="Pfam" id="PF00329">
    <property type="entry name" value="Complex1_30kDa"/>
    <property type="match status" value="1"/>
</dbReference>
<dbReference type="SUPFAM" id="SSF143243">
    <property type="entry name" value="Nqo5-like"/>
    <property type="match status" value="1"/>
</dbReference>
<dbReference type="PROSITE" id="PS00542">
    <property type="entry name" value="COMPLEX1_30K"/>
    <property type="match status" value="1"/>
</dbReference>
<keyword id="KW-0997">Cell inner membrane</keyword>
<keyword id="KW-1003">Cell membrane</keyword>
<keyword id="KW-0472">Membrane</keyword>
<keyword id="KW-0520">NAD</keyword>
<keyword id="KW-0874">Quinone</keyword>
<keyword id="KW-1278">Translocase</keyword>
<keyword id="KW-0813">Transport</keyword>
<keyword id="KW-0830">Ubiquinone</keyword>
<sequence length="215" mass="25180">MSARLQDHFNNVEKILNGFSVECYVAYGEINISIKDQRDIHLVLKKLKKEYHFKQLTDITAVDYLTYGQSDWQVGKVVSQTGFSRGRQQGFKTADVNNRFEIIYQLLSMANNVRVRVKCKLKDAQIIMVDSVEDLWPSANWAEREVYDMFGIYFNNHPDLRRVLTDYGFVGHPLRKDFPQTGYVEMRYDENLGKVVYEPVEIDDRVNAPRVIRNQ</sequence>
<accession>B0TWP6</accession>
<evidence type="ECO:0000255" key="1">
    <source>
        <dbReference type="HAMAP-Rule" id="MF_01357"/>
    </source>
</evidence>
<name>NUOC_FRAP2</name>
<comment type="function">
    <text evidence="1">NDH-1 shuttles electrons from NADH, via FMN and iron-sulfur (Fe-S) centers, to quinones in the respiratory chain. The immediate electron acceptor for the enzyme in this species is believed to be ubiquinone. Couples the redox reaction to proton translocation (for every two electrons transferred, four hydrogen ions are translocated across the cytoplasmic membrane), and thus conserves the redox energy in a proton gradient.</text>
</comment>
<comment type="catalytic activity">
    <reaction evidence="1">
        <text>a quinone + NADH + 5 H(+)(in) = a quinol + NAD(+) + 4 H(+)(out)</text>
        <dbReference type="Rhea" id="RHEA:57888"/>
        <dbReference type="ChEBI" id="CHEBI:15378"/>
        <dbReference type="ChEBI" id="CHEBI:24646"/>
        <dbReference type="ChEBI" id="CHEBI:57540"/>
        <dbReference type="ChEBI" id="CHEBI:57945"/>
        <dbReference type="ChEBI" id="CHEBI:132124"/>
    </reaction>
</comment>
<comment type="subunit">
    <text evidence="1">NDH-1 is composed of 14 different subunits. Subunits NuoB, C, D, E, F, and G constitute the peripheral sector of the complex.</text>
</comment>
<comment type="subcellular location">
    <subcellularLocation>
        <location evidence="1">Cell inner membrane</location>
        <topology evidence="1">Peripheral membrane protein</topology>
        <orientation evidence="1">Cytoplasmic side</orientation>
    </subcellularLocation>
</comment>
<comment type="similarity">
    <text evidence="1">Belongs to the complex I 30 kDa subunit family.</text>
</comment>
<organism>
    <name type="scientific">Francisella philomiragia subsp. philomiragia (strain ATCC 25017 / CCUG 19701 / FSC 153 / O#319-036)</name>
    <dbReference type="NCBI Taxonomy" id="484022"/>
    <lineage>
        <taxon>Bacteria</taxon>
        <taxon>Pseudomonadati</taxon>
        <taxon>Pseudomonadota</taxon>
        <taxon>Gammaproteobacteria</taxon>
        <taxon>Thiotrichales</taxon>
        <taxon>Francisellaceae</taxon>
        <taxon>Francisella</taxon>
    </lineage>
</organism>
<protein>
    <recommendedName>
        <fullName evidence="1">NADH-quinone oxidoreductase subunit C</fullName>
        <ecNumber evidence="1">7.1.1.-</ecNumber>
    </recommendedName>
    <alternativeName>
        <fullName evidence="1">NADH dehydrogenase I subunit C</fullName>
    </alternativeName>
    <alternativeName>
        <fullName evidence="1">NDH-1 subunit C</fullName>
    </alternativeName>
</protein>
<feature type="chain" id="PRO_0000358095" description="NADH-quinone oxidoreductase subunit C">
    <location>
        <begin position="1"/>
        <end position="215"/>
    </location>
</feature>